<gene>
    <name evidence="1" type="primary">cysJ</name>
    <name type="ordered locus">ECP_2738</name>
</gene>
<accession>Q0TEA2</accession>
<feature type="chain" id="PRO_0000292968" description="Sulfite reductase [NADPH] flavoprotein alpha-component">
    <location>
        <begin position="1"/>
        <end position="599"/>
    </location>
</feature>
<feature type="domain" description="Flavodoxin-like" evidence="1">
    <location>
        <begin position="64"/>
        <end position="202"/>
    </location>
</feature>
<feature type="domain" description="FAD-binding FR-type" evidence="1">
    <location>
        <begin position="234"/>
        <end position="448"/>
    </location>
</feature>
<feature type="binding site" evidence="1">
    <location>
        <begin position="70"/>
        <end position="75"/>
    </location>
    <ligand>
        <name>FMN</name>
        <dbReference type="ChEBI" id="CHEBI:58210"/>
    </ligand>
</feature>
<feature type="binding site" evidence="1">
    <location>
        <begin position="117"/>
        <end position="120"/>
    </location>
    <ligand>
        <name>FMN</name>
        <dbReference type="ChEBI" id="CHEBI:58210"/>
    </ligand>
</feature>
<feature type="binding site" evidence="1">
    <location>
        <begin position="153"/>
        <end position="162"/>
    </location>
    <ligand>
        <name>FMN</name>
        <dbReference type="ChEBI" id="CHEBI:58210"/>
    </ligand>
</feature>
<feature type="binding site" evidence="1">
    <location>
        <position position="322"/>
    </location>
    <ligand>
        <name>FAD</name>
        <dbReference type="ChEBI" id="CHEBI:57692"/>
    </ligand>
</feature>
<feature type="binding site" evidence="1">
    <location>
        <position position="356"/>
    </location>
    <ligand>
        <name>FAD</name>
        <dbReference type="ChEBI" id="CHEBI:57692"/>
    </ligand>
</feature>
<feature type="binding site" evidence="1">
    <location>
        <begin position="386"/>
        <end position="389"/>
    </location>
    <ligand>
        <name>FAD</name>
        <dbReference type="ChEBI" id="CHEBI:57692"/>
    </ligand>
</feature>
<feature type="binding site" evidence="1">
    <location>
        <begin position="404"/>
        <end position="406"/>
    </location>
    <ligand>
        <name>FAD</name>
        <dbReference type="ChEBI" id="CHEBI:57692"/>
    </ligand>
</feature>
<feature type="binding site" evidence="1">
    <location>
        <position position="410"/>
    </location>
    <ligand>
        <name>FAD</name>
        <dbReference type="ChEBI" id="CHEBI:57692"/>
    </ligand>
</feature>
<feature type="binding site" evidence="1">
    <location>
        <begin position="419"/>
        <end position="422"/>
    </location>
    <ligand>
        <name>FAD</name>
        <dbReference type="ChEBI" id="CHEBI:57692"/>
    </ligand>
</feature>
<feature type="binding site" evidence="1">
    <location>
        <begin position="519"/>
        <end position="520"/>
    </location>
    <ligand>
        <name>NADP(+)</name>
        <dbReference type="ChEBI" id="CHEBI:58349"/>
    </ligand>
</feature>
<feature type="binding site" evidence="1">
    <location>
        <begin position="525"/>
        <end position="529"/>
    </location>
    <ligand>
        <name>NADP(+)</name>
        <dbReference type="ChEBI" id="CHEBI:58349"/>
    </ligand>
</feature>
<feature type="binding site" evidence="1">
    <location>
        <position position="561"/>
    </location>
    <ligand>
        <name>NADP(+)</name>
        <dbReference type="ChEBI" id="CHEBI:58349"/>
    </ligand>
</feature>
<feature type="binding site" evidence="1">
    <location>
        <position position="599"/>
    </location>
    <ligand>
        <name>FAD</name>
        <dbReference type="ChEBI" id="CHEBI:57692"/>
    </ligand>
</feature>
<comment type="function">
    <text evidence="1">Component of the sulfite reductase complex that catalyzes the 6-electron reduction of sulfite to sulfide. This is one of several activities required for the biosynthesis of L-cysteine from sulfate. The flavoprotein component catalyzes the electron flow from NADPH -&gt; FAD -&gt; FMN to the hemoprotein component.</text>
</comment>
<comment type="catalytic activity">
    <reaction evidence="1">
        <text>hydrogen sulfide + 3 NADP(+) + 3 H2O = sulfite + 3 NADPH + 4 H(+)</text>
        <dbReference type="Rhea" id="RHEA:13801"/>
        <dbReference type="ChEBI" id="CHEBI:15377"/>
        <dbReference type="ChEBI" id="CHEBI:15378"/>
        <dbReference type="ChEBI" id="CHEBI:17359"/>
        <dbReference type="ChEBI" id="CHEBI:29919"/>
        <dbReference type="ChEBI" id="CHEBI:57783"/>
        <dbReference type="ChEBI" id="CHEBI:58349"/>
        <dbReference type="EC" id="1.8.1.2"/>
    </reaction>
</comment>
<comment type="cofactor">
    <cofactor evidence="1">
        <name>FAD</name>
        <dbReference type="ChEBI" id="CHEBI:57692"/>
    </cofactor>
    <text evidence="1">Binds 1 FAD per subunit.</text>
</comment>
<comment type="cofactor">
    <cofactor evidence="1">
        <name>FMN</name>
        <dbReference type="ChEBI" id="CHEBI:58210"/>
    </cofactor>
    <text evidence="1">Binds 1 FMN per subunit.</text>
</comment>
<comment type="pathway">
    <text evidence="1">Sulfur metabolism; hydrogen sulfide biosynthesis; hydrogen sulfide from sulfite (NADPH route): step 1/1.</text>
</comment>
<comment type="subunit">
    <text evidence="1">Alpha(8)-beta(8). The alpha component is a flavoprotein, the beta component is a hemoprotein.</text>
</comment>
<comment type="similarity">
    <text evidence="1">Belongs to the NADPH-dependent sulphite reductase flavoprotein subunit CysJ family.</text>
</comment>
<comment type="similarity">
    <text evidence="1">In the N-terminal section; belongs to the flavodoxin family.</text>
</comment>
<comment type="similarity">
    <text evidence="1">In the C-terminal section; belongs to the flavoprotein pyridine nucleotide cytochrome reductase family.</text>
</comment>
<name>CYSJ_ECOL5</name>
<reference key="1">
    <citation type="journal article" date="2006" name="Mol. Microbiol.">
        <title>Role of pathogenicity island-associated integrases in the genome plasticity of uropathogenic Escherichia coli strain 536.</title>
        <authorList>
            <person name="Hochhut B."/>
            <person name="Wilde C."/>
            <person name="Balling G."/>
            <person name="Middendorf B."/>
            <person name="Dobrindt U."/>
            <person name="Brzuszkiewicz E."/>
            <person name="Gottschalk G."/>
            <person name="Carniel E."/>
            <person name="Hacker J."/>
        </authorList>
    </citation>
    <scope>NUCLEOTIDE SEQUENCE [LARGE SCALE GENOMIC DNA]</scope>
    <source>
        <strain>536 / UPEC</strain>
    </source>
</reference>
<organism>
    <name type="scientific">Escherichia coli O6:K15:H31 (strain 536 / UPEC)</name>
    <dbReference type="NCBI Taxonomy" id="362663"/>
    <lineage>
        <taxon>Bacteria</taxon>
        <taxon>Pseudomonadati</taxon>
        <taxon>Pseudomonadota</taxon>
        <taxon>Gammaproteobacteria</taxon>
        <taxon>Enterobacterales</taxon>
        <taxon>Enterobacteriaceae</taxon>
        <taxon>Escherichia</taxon>
    </lineage>
</organism>
<proteinExistence type="inferred from homology"/>
<dbReference type="EC" id="1.8.1.2" evidence="1"/>
<dbReference type="EMBL" id="CP000247">
    <property type="protein sequence ID" value="ABG70727.1"/>
    <property type="molecule type" value="Genomic_DNA"/>
</dbReference>
<dbReference type="RefSeq" id="WP_000211914.1">
    <property type="nucleotide sequence ID" value="NC_008253.1"/>
</dbReference>
<dbReference type="SMR" id="Q0TEA2"/>
<dbReference type="KEGG" id="ecp:ECP_2738"/>
<dbReference type="HOGENOM" id="CLU_001570_17_7_6"/>
<dbReference type="UniPathway" id="UPA00140">
    <property type="reaction ID" value="UER00207"/>
</dbReference>
<dbReference type="Proteomes" id="UP000009182">
    <property type="component" value="Chromosome"/>
</dbReference>
<dbReference type="GO" id="GO:0005829">
    <property type="term" value="C:cytosol"/>
    <property type="evidence" value="ECO:0007669"/>
    <property type="project" value="TreeGrafter"/>
</dbReference>
<dbReference type="GO" id="GO:0050660">
    <property type="term" value="F:flavin adenine dinucleotide binding"/>
    <property type="evidence" value="ECO:0007669"/>
    <property type="project" value="InterPro"/>
</dbReference>
<dbReference type="GO" id="GO:0010181">
    <property type="term" value="F:FMN binding"/>
    <property type="evidence" value="ECO:0007669"/>
    <property type="project" value="InterPro"/>
</dbReference>
<dbReference type="GO" id="GO:0004783">
    <property type="term" value="F:sulfite reductase (NADPH) activity"/>
    <property type="evidence" value="ECO:0007669"/>
    <property type="project" value="UniProtKB-UniRule"/>
</dbReference>
<dbReference type="GO" id="GO:0019344">
    <property type="term" value="P:cysteine biosynthetic process"/>
    <property type="evidence" value="ECO:0007669"/>
    <property type="project" value="UniProtKB-KW"/>
</dbReference>
<dbReference type="GO" id="GO:0070814">
    <property type="term" value="P:hydrogen sulfide biosynthetic process"/>
    <property type="evidence" value="ECO:0007669"/>
    <property type="project" value="UniProtKB-UniRule"/>
</dbReference>
<dbReference type="GO" id="GO:0000103">
    <property type="term" value="P:sulfate assimilation"/>
    <property type="evidence" value="ECO:0007669"/>
    <property type="project" value="UniProtKB-UniRule"/>
</dbReference>
<dbReference type="CDD" id="cd06199">
    <property type="entry name" value="SiR"/>
    <property type="match status" value="1"/>
</dbReference>
<dbReference type="FunFam" id="3.40.50.80:FF:000001">
    <property type="entry name" value="NADPH--cytochrome P450 reductase 1"/>
    <property type="match status" value="1"/>
</dbReference>
<dbReference type="FunFam" id="1.20.990.10:FF:000004">
    <property type="entry name" value="Sulfite reductase [NADPH] flavoprotein alpha-component"/>
    <property type="match status" value="1"/>
</dbReference>
<dbReference type="FunFam" id="3.40.50.360:FF:000018">
    <property type="entry name" value="Sulfite reductase [NADPH] flavoprotein alpha-component"/>
    <property type="match status" value="1"/>
</dbReference>
<dbReference type="Gene3D" id="3.40.50.360">
    <property type="match status" value="1"/>
</dbReference>
<dbReference type="Gene3D" id="1.20.990.10">
    <property type="entry name" value="NADPH-cytochrome p450 Reductase, Chain A, domain 3"/>
    <property type="match status" value="1"/>
</dbReference>
<dbReference type="Gene3D" id="3.40.50.80">
    <property type="entry name" value="Nucleotide-binding domain of ferredoxin-NADP reductase (FNR) module"/>
    <property type="match status" value="1"/>
</dbReference>
<dbReference type="Gene3D" id="2.40.30.10">
    <property type="entry name" value="Translation factors"/>
    <property type="match status" value="1"/>
</dbReference>
<dbReference type="HAMAP" id="MF_01541">
    <property type="entry name" value="CysJ"/>
    <property type="match status" value="1"/>
</dbReference>
<dbReference type="InterPro" id="IPR010199">
    <property type="entry name" value="CysJ"/>
</dbReference>
<dbReference type="InterPro" id="IPR003097">
    <property type="entry name" value="CysJ-like_FAD-binding"/>
</dbReference>
<dbReference type="InterPro" id="IPR029758">
    <property type="entry name" value="CysJ_Proteobact"/>
</dbReference>
<dbReference type="InterPro" id="IPR017927">
    <property type="entry name" value="FAD-bd_FR_type"/>
</dbReference>
<dbReference type="InterPro" id="IPR001094">
    <property type="entry name" value="Flavdoxin-like"/>
</dbReference>
<dbReference type="InterPro" id="IPR008254">
    <property type="entry name" value="Flavodoxin/NO_synth"/>
</dbReference>
<dbReference type="InterPro" id="IPR001709">
    <property type="entry name" value="Flavoprot_Pyr_Nucl_cyt_Rdtase"/>
</dbReference>
<dbReference type="InterPro" id="IPR029039">
    <property type="entry name" value="Flavoprotein-like_sf"/>
</dbReference>
<dbReference type="InterPro" id="IPR039261">
    <property type="entry name" value="FNR_nucleotide-bd"/>
</dbReference>
<dbReference type="InterPro" id="IPR023173">
    <property type="entry name" value="NADPH_Cyt_P450_Rdtase_alpha"/>
</dbReference>
<dbReference type="InterPro" id="IPR001433">
    <property type="entry name" value="OxRdtase_FAD/NAD-bd"/>
</dbReference>
<dbReference type="InterPro" id="IPR017938">
    <property type="entry name" value="Riboflavin_synthase-like_b-brl"/>
</dbReference>
<dbReference type="NCBIfam" id="TIGR01931">
    <property type="entry name" value="cysJ"/>
    <property type="match status" value="1"/>
</dbReference>
<dbReference type="NCBIfam" id="NF004859">
    <property type="entry name" value="PRK06214.1"/>
    <property type="match status" value="1"/>
</dbReference>
<dbReference type="NCBIfam" id="NF008197">
    <property type="entry name" value="PRK10953.1"/>
    <property type="match status" value="1"/>
</dbReference>
<dbReference type="PANTHER" id="PTHR19384:SF128">
    <property type="entry name" value="NADPH OXIDOREDUCTASE A"/>
    <property type="match status" value="1"/>
</dbReference>
<dbReference type="PANTHER" id="PTHR19384">
    <property type="entry name" value="NITRIC OXIDE SYNTHASE-RELATED"/>
    <property type="match status" value="1"/>
</dbReference>
<dbReference type="Pfam" id="PF00667">
    <property type="entry name" value="FAD_binding_1"/>
    <property type="match status" value="1"/>
</dbReference>
<dbReference type="Pfam" id="PF00258">
    <property type="entry name" value="Flavodoxin_1"/>
    <property type="match status" value="1"/>
</dbReference>
<dbReference type="Pfam" id="PF00175">
    <property type="entry name" value="NAD_binding_1"/>
    <property type="match status" value="1"/>
</dbReference>
<dbReference type="PIRSF" id="PIRSF000207">
    <property type="entry name" value="SiR-FP_CysJ"/>
    <property type="match status" value="1"/>
</dbReference>
<dbReference type="PRINTS" id="PR00369">
    <property type="entry name" value="FLAVODOXIN"/>
</dbReference>
<dbReference type="PRINTS" id="PR00371">
    <property type="entry name" value="FPNCR"/>
</dbReference>
<dbReference type="SUPFAM" id="SSF52343">
    <property type="entry name" value="Ferredoxin reductase-like, C-terminal NADP-linked domain"/>
    <property type="match status" value="1"/>
</dbReference>
<dbReference type="SUPFAM" id="SSF52218">
    <property type="entry name" value="Flavoproteins"/>
    <property type="match status" value="1"/>
</dbReference>
<dbReference type="SUPFAM" id="SSF63380">
    <property type="entry name" value="Riboflavin synthase domain-like"/>
    <property type="match status" value="1"/>
</dbReference>
<dbReference type="PROSITE" id="PS51384">
    <property type="entry name" value="FAD_FR"/>
    <property type="match status" value="1"/>
</dbReference>
<dbReference type="PROSITE" id="PS50902">
    <property type="entry name" value="FLAVODOXIN_LIKE"/>
    <property type="match status" value="1"/>
</dbReference>
<keyword id="KW-0028">Amino-acid biosynthesis</keyword>
<keyword id="KW-0198">Cysteine biosynthesis</keyword>
<keyword id="KW-0249">Electron transport</keyword>
<keyword id="KW-0274">FAD</keyword>
<keyword id="KW-0285">Flavoprotein</keyword>
<keyword id="KW-0288">FMN</keyword>
<keyword id="KW-0521">NADP</keyword>
<keyword id="KW-0560">Oxidoreductase</keyword>
<keyword id="KW-0813">Transport</keyword>
<protein>
    <recommendedName>
        <fullName evidence="1">Sulfite reductase [NADPH] flavoprotein alpha-component</fullName>
        <shortName evidence="1">SiR-FP</shortName>
        <ecNumber evidence="1">1.8.1.2</ecNumber>
    </recommendedName>
</protein>
<sequence length="599" mass="66312">MTTQVPPSALLPLNPEQLARLQAATTDLTPTQLAWVSGYFWGVLNQQPAALAATPAPAAEMPGITIISASQTGNARRVAEALRDDLLAAKLNVKLVNAGDYKFKQIASEKLLIVVTSTQGEGEPPEEAVALHKFLFSKKAPKLENTAFAVFSLGDSSYEFFCQSGKDFDSKLAELGGERLLDRVDADVEYQAAASEWRARVVDALKSRAPVAAPSQSVATGTVNEIHTSPYSKDAPLAASLSVNQKITGRNSEKDVRHIEIDLGDSGLRYQPGDALGVWYQNDPALVKELVELLWLKGDEPVTVEGKTLPLNEALQWHFELTVNTANIVENYATLTRSETLLPLVGDKAKLQHYAATTPIVDMVRFSPAQLDAEALINLLRPLTPRLYSIASSQAEVENEVHVTVGVVRYDVEGRARAGGASSFLADRVEEEGEVRVFIEHNDNFRLPTNPETPVIMIGPGTGIAPFRAFMQQRAADEAPGKNWLFFGNPHFTEDFLYQVEWQRYVKEGVLTRIDLAWSRDQKEKIYVQDKLREQGAELWRWINDGAHIYVCGDANRMAKDVEQALLEVIAEFGGMDTEAADEFLSELRVERRYQRDVY</sequence>
<evidence type="ECO:0000255" key="1">
    <source>
        <dbReference type="HAMAP-Rule" id="MF_01541"/>
    </source>
</evidence>